<sequence>MVSKSLIVLLLVSVLVSTFFTTEAYPASYDDDFDALDDLDGLDLDDLLDSEPADLVLLDMWANMLDSQDFEDFE</sequence>
<reference key="1">
    <citation type="journal article" date="2005" name="Toxicon">
        <title>The Brazilian scorpion Tityus costatus Karsch: genes, peptides and function.</title>
        <authorList>
            <person name="Diego-Garcia E."/>
            <person name="Batista C.V.F."/>
            <person name="Garcia-Gomez B.I."/>
            <person name="Lucas S."/>
            <person name="Candido D.M."/>
            <person name="Gomez-Lagunas F."/>
            <person name="Possani L.D."/>
        </authorList>
    </citation>
    <scope>NUCLEOTIDE SEQUENCE [MRNA]</scope>
    <source>
        <tissue>Venom gland</tissue>
    </source>
</reference>
<feature type="signal peptide" evidence="2">
    <location>
        <begin position="1"/>
        <end position="24"/>
    </location>
</feature>
<feature type="chain" id="PRO_0000231517" description="Anionic peptide clone 9">
    <location>
        <begin position="25"/>
        <end position="74"/>
    </location>
</feature>
<protein>
    <recommendedName>
        <fullName>Anionic peptide clone 9</fullName>
    </recommendedName>
</protein>
<proteinExistence type="inferred from homology"/>
<dbReference type="EMBL" id="AY740691">
    <property type="protein sequence ID" value="AAW72461.1"/>
    <property type="molecule type" value="mRNA"/>
</dbReference>
<dbReference type="GO" id="GO:0005576">
    <property type="term" value="C:extracellular region"/>
    <property type="evidence" value="ECO:0007669"/>
    <property type="project" value="UniProtKB-SubCell"/>
</dbReference>
<dbReference type="GO" id="GO:0042742">
    <property type="term" value="P:defense response to bacterium"/>
    <property type="evidence" value="ECO:0007669"/>
    <property type="project" value="UniProtKB-KW"/>
</dbReference>
<comment type="function">
    <text evidence="1">May be an antimicrobial peptide.</text>
</comment>
<comment type="subcellular location">
    <subcellularLocation>
        <location evidence="1">Secreted</location>
    </subcellularLocation>
</comment>
<comment type="tissue specificity">
    <text evidence="3">Expressed by the venom gland.</text>
</comment>
<comment type="similarity">
    <text evidence="3">Belongs to the non-disulfide-bridged peptide (NDBP) superfamily. Long chain multifunctional peptide (group 2) family.</text>
</comment>
<name>NDB2U_TITCO</name>
<accession>Q5G8B0</accession>
<evidence type="ECO:0000250" key="1"/>
<evidence type="ECO:0000255" key="2"/>
<evidence type="ECO:0000305" key="3"/>
<keyword id="KW-0044">Antibiotic</keyword>
<keyword id="KW-0929">Antimicrobial</keyword>
<keyword id="KW-0964">Secreted</keyword>
<keyword id="KW-0732">Signal</keyword>
<organism>
    <name type="scientific">Tityus costatus</name>
    <name type="common">Brazilian scorpion</name>
    <dbReference type="NCBI Taxonomy" id="309814"/>
    <lineage>
        <taxon>Eukaryota</taxon>
        <taxon>Metazoa</taxon>
        <taxon>Ecdysozoa</taxon>
        <taxon>Arthropoda</taxon>
        <taxon>Chelicerata</taxon>
        <taxon>Arachnida</taxon>
        <taxon>Scorpiones</taxon>
        <taxon>Buthida</taxon>
        <taxon>Buthoidea</taxon>
        <taxon>Buthidae</taxon>
        <taxon>Tityus</taxon>
    </lineage>
</organism>